<organism>
    <name type="scientific">Staphylococcus aureus (strain JH1)</name>
    <dbReference type="NCBI Taxonomy" id="359787"/>
    <lineage>
        <taxon>Bacteria</taxon>
        <taxon>Bacillati</taxon>
        <taxon>Bacillota</taxon>
        <taxon>Bacilli</taxon>
        <taxon>Bacillales</taxon>
        <taxon>Staphylococcaceae</taxon>
        <taxon>Staphylococcus</taxon>
    </lineage>
</organism>
<keyword id="KW-0131">Cell cycle</keyword>
<keyword id="KW-0132">Cell division</keyword>
<keyword id="KW-0342">GTP-binding</keyword>
<keyword id="KW-0460">Magnesium</keyword>
<keyword id="KW-0479">Metal-binding</keyword>
<keyword id="KW-0547">Nucleotide-binding</keyword>
<keyword id="KW-0717">Septation</keyword>
<sequence>MKVNPNNIELIISAVKEEQYPETELSEVALSGRSNVGKSTFINSMIGRKNMARTSQQPGKTQTLNFYNIDEQLIFVDVPGYGYAKVSKTQREKFGKMIEEYITKRENLQLVIQLVDLRHDPTQDDILMYNYLKHFDIPTLVICTKEDKIPKGKVQKHIKNIKTQLDMDPDDTIVSYSSIQNNKQQQIWNLIEPYIS</sequence>
<proteinExistence type="inferred from homology"/>
<protein>
    <recommendedName>
        <fullName evidence="1">Probable GTP-binding protein EngB</fullName>
    </recommendedName>
</protein>
<name>ENGB_STAA2</name>
<dbReference type="EMBL" id="CP000736">
    <property type="protein sequence ID" value="ABR52609.1"/>
    <property type="molecule type" value="Genomic_DNA"/>
</dbReference>
<dbReference type="SMR" id="A6U2E1"/>
<dbReference type="KEGG" id="sah:SaurJH1_1765"/>
<dbReference type="HOGENOM" id="CLU_033732_3_0_9"/>
<dbReference type="GO" id="GO:0005829">
    <property type="term" value="C:cytosol"/>
    <property type="evidence" value="ECO:0007669"/>
    <property type="project" value="TreeGrafter"/>
</dbReference>
<dbReference type="GO" id="GO:0005525">
    <property type="term" value="F:GTP binding"/>
    <property type="evidence" value="ECO:0007669"/>
    <property type="project" value="UniProtKB-UniRule"/>
</dbReference>
<dbReference type="GO" id="GO:0046872">
    <property type="term" value="F:metal ion binding"/>
    <property type="evidence" value="ECO:0007669"/>
    <property type="project" value="UniProtKB-KW"/>
</dbReference>
<dbReference type="GO" id="GO:0000917">
    <property type="term" value="P:division septum assembly"/>
    <property type="evidence" value="ECO:0007669"/>
    <property type="project" value="UniProtKB-KW"/>
</dbReference>
<dbReference type="CDD" id="cd01876">
    <property type="entry name" value="YihA_EngB"/>
    <property type="match status" value="1"/>
</dbReference>
<dbReference type="FunFam" id="3.40.50.300:FF:000098">
    <property type="entry name" value="Probable GTP-binding protein EngB"/>
    <property type="match status" value="1"/>
</dbReference>
<dbReference type="Gene3D" id="3.40.50.300">
    <property type="entry name" value="P-loop containing nucleotide triphosphate hydrolases"/>
    <property type="match status" value="1"/>
</dbReference>
<dbReference type="HAMAP" id="MF_00321">
    <property type="entry name" value="GTPase_EngB"/>
    <property type="match status" value="1"/>
</dbReference>
<dbReference type="InterPro" id="IPR030393">
    <property type="entry name" value="G_ENGB_dom"/>
</dbReference>
<dbReference type="InterPro" id="IPR006073">
    <property type="entry name" value="GTP-bd"/>
</dbReference>
<dbReference type="InterPro" id="IPR019987">
    <property type="entry name" value="GTP-bd_ribosome_bio_YsxC"/>
</dbReference>
<dbReference type="InterPro" id="IPR027417">
    <property type="entry name" value="P-loop_NTPase"/>
</dbReference>
<dbReference type="NCBIfam" id="TIGR03598">
    <property type="entry name" value="GTPase_YsxC"/>
    <property type="match status" value="1"/>
</dbReference>
<dbReference type="PANTHER" id="PTHR11649:SF13">
    <property type="entry name" value="ENGB-TYPE G DOMAIN-CONTAINING PROTEIN"/>
    <property type="match status" value="1"/>
</dbReference>
<dbReference type="PANTHER" id="PTHR11649">
    <property type="entry name" value="MSS1/TRME-RELATED GTP-BINDING PROTEIN"/>
    <property type="match status" value="1"/>
</dbReference>
<dbReference type="Pfam" id="PF01926">
    <property type="entry name" value="MMR_HSR1"/>
    <property type="match status" value="1"/>
</dbReference>
<dbReference type="SUPFAM" id="SSF52540">
    <property type="entry name" value="P-loop containing nucleoside triphosphate hydrolases"/>
    <property type="match status" value="1"/>
</dbReference>
<dbReference type="PROSITE" id="PS51706">
    <property type="entry name" value="G_ENGB"/>
    <property type="match status" value="1"/>
</dbReference>
<accession>A6U2E1</accession>
<gene>
    <name evidence="1" type="primary">engB</name>
    <name type="ordered locus">SaurJH1_1765</name>
</gene>
<reference key="1">
    <citation type="submission" date="2007-06" db="EMBL/GenBank/DDBJ databases">
        <title>Complete sequence of chromosome of Staphylococcus aureus subsp. aureus JH1.</title>
        <authorList>
            <consortium name="US DOE Joint Genome Institute"/>
            <person name="Copeland A."/>
            <person name="Lucas S."/>
            <person name="Lapidus A."/>
            <person name="Barry K."/>
            <person name="Detter J.C."/>
            <person name="Glavina del Rio T."/>
            <person name="Hammon N."/>
            <person name="Israni S."/>
            <person name="Dalin E."/>
            <person name="Tice H."/>
            <person name="Pitluck S."/>
            <person name="Chain P."/>
            <person name="Malfatti S."/>
            <person name="Shin M."/>
            <person name="Vergez L."/>
            <person name="Schmutz J."/>
            <person name="Larimer F."/>
            <person name="Land M."/>
            <person name="Hauser L."/>
            <person name="Kyrpides N."/>
            <person name="Ivanova N."/>
            <person name="Tomasz A."/>
            <person name="Richardson P."/>
        </authorList>
    </citation>
    <scope>NUCLEOTIDE SEQUENCE [LARGE SCALE GENOMIC DNA]</scope>
    <source>
        <strain>JH1</strain>
    </source>
</reference>
<evidence type="ECO:0000255" key="1">
    <source>
        <dbReference type="HAMAP-Rule" id="MF_00321"/>
    </source>
</evidence>
<feature type="chain" id="PRO_1000079185" description="Probable GTP-binding protein EngB">
    <location>
        <begin position="1"/>
        <end position="196"/>
    </location>
</feature>
<feature type="domain" description="EngB-type G" evidence="1">
    <location>
        <begin position="24"/>
        <end position="196"/>
    </location>
</feature>
<feature type="binding site" evidence="1">
    <location>
        <begin position="32"/>
        <end position="39"/>
    </location>
    <ligand>
        <name>GTP</name>
        <dbReference type="ChEBI" id="CHEBI:37565"/>
    </ligand>
</feature>
<feature type="binding site" evidence="1">
    <location>
        <position position="39"/>
    </location>
    <ligand>
        <name>Mg(2+)</name>
        <dbReference type="ChEBI" id="CHEBI:18420"/>
    </ligand>
</feature>
<feature type="binding site" evidence="1">
    <location>
        <begin position="59"/>
        <end position="63"/>
    </location>
    <ligand>
        <name>GTP</name>
        <dbReference type="ChEBI" id="CHEBI:37565"/>
    </ligand>
</feature>
<feature type="binding site" evidence="1">
    <location>
        <position position="61"/>
    </location>
    <ligand>
        <name>Mg(2+)</name>
        <dbReference type="ChEBI" id="CHEBI:18420"/>
    </ligand>
</feature>
<feature type="binding site" evidence="1">
    <location>
        <begin position="77"/>
        <end position="80"/>
    </location>
    <ligand>
        <name>GTP</name>
        <dbReference type="ChEBI" id="CHEBI:37565"/>
    </ligand>
</feature>
<feature type="binding site" evidence="1">
    <location>
        <begin position="144"/>
        <end position="147"/>
    </location>
    <ligand>
        <name>GTP</name>
        <dbReference type="ChEBI" id="CHEBI:37565"/>
    </ligand>
</feature>
<feature type="binding site" evidence="1">
    <location>
        <begin position="176"/>
        <end position="178"/>
    </location>
    <ligand>
        <name>GTP</name>
        <dbReference type="ChEBI" id="CHEBI:37565"/>
    </ligand>
</feature>
<comment type="function">
    <text evidence="1">Necessary for normal cell division and for the maintenance of normal septation.</text>
</comment>
<comment type="cofactor">
    <cofactor evidence="1">
        <name>Mg(2+)</name>
        <dbReference type="ChEBI" id="CHEBI:18420"/>
    </cofactor>
</comment>
<comment type="similarity">
    <text evidence="1">Belongs to the TRAFAC class TrmE-Era-EngA-EngB-Septin-like GTPase superfamily. EngB GTPase family.</text>
</comment>